<dbReference type="EMBL" id="U40829">
    <property type="protein sequence ID" value="AAB68286.1"/>
    <property type="molecule type" value="Genomic_DNA"/>
</dbReference>
<dbReference type="EMBL" id="BK006949">
    <property type="protein sequence ID" value="DAA11561.1"/>
    <property type="molecule type" value="Genomic_DNA"/>
</dbReference>
<dbReference type="PIR" id="S69035">
    <property type="entry name" value="S69035"/>
</dbReference>
<dbReference type="RefSeq" id="NP_015474.1">
    <property type="nucleotide sequence ID" value="NM_001184245.1"/>
</dbReference>
<dbReference type="SMR" id="Q06523"/>
<dbReference type="BioGRID" id="36316">
    <property type="interactions" value="34"/>
</dbReference>
<dbReference type="DIP" id="DIP-3808N"/>
<dbReference type="FunCoup" id="Q06523">
    <property type="interactions" value="48"/>
</dbReference>
<dbReference type="IntAct" id="Q06523">
    <property type="interactions" value="5"/>
</dbReference>
<dbReference type="iPTMnet" id="Q06523"/>
<dbReference type="PaxDb" id="4932-YPR148C"/>
<dbReference type="PeptideAtlas" id="Q06523"/>
<dbReference type="EnsemblFungi" id="YPR148C_mRNA">
    <property type="protein sequence ID" value="YPR148C"/>
    <property type="gene ID" value="YPR148C"/>
</dbReference>
<dbReference type="GeneID" id="856271"/>
<dbReference type="KEGG" id="sce:YPR148C"/>
<dbReference type="AGR" id="SGD:S000006352"/>
<dbReference type="SGD" id="S000006352">
    <property type="gene designation" value="YPR148C"/>
</dbReference>
<dbReference type="VEuPathDB" id="FungiDB:YPR148C"/>
<dbReference type="eggNOG" id="ENOG502QZYP">
    <property type="taxonomic scope" value="Eukaryota"/>
</dbReference>
<dbReference type="HOGENOM" id="CLU_059029_0_0_1"/>
<dbReference type="InParanoid" id="Q06523"/>
<dbReference type="OMA" id="YRQCVQE"/>
<dbReference type="OrthoDB" id="5549748at2759"/>
<dbReference type="BioCyc" id="YEAST:G3O-34280-MONOMER"/>
<dbReference type="BioGRID-ORCS" id="856271">
    <property type="hits" value="1 hit in 10 CRISPR screens"/>
</dbReference>
<dbReference type="PRO" id="PR:Q06523"/>
<dbReference type="Proteomes" id="UP000002311">
    <property type="component" value="Chromosome XVI"/>
</dbReference>
<dbReference type="RNAct" id="Q06523">
    <property type="molecule type" value="protein"/>
</dbReference>
<dbReference type="GO" id="GO:0005737">
    <property type="term" value="C:cytoplasm"/>
    <property type="evidence" value="ECO:0007005"/>
    <property type="project" value="SGD"/>
</dbReference>
<dbReference type="Gene3D" id="1.20.1270.60">
    <property type="entry name" value="Arfaptin homology (AH) domain/BAR domain"/>
    <property type="match status" value="1"/>
</dbReference>
<dbReference type="InterPro" id="IPR027267">
    <property type="entry name" value="AH/BAR_dom_sf"/>
</dbReference>
<dbReference type="InterPro" id="IPR018859">
    <property type="entry name" value="BAR_dom-cont"/>
</dbReference>
<dbReference type="Pfam" id="PF10455">
    <property type="entry name" value="BAR_2"/>
    <property type="match status" value="1"/>
</dbReference>
<dbReference type="SUPFAM" id="SSF103657">
    <property type="entry name" value="BAR/IMD domain-like"/>
    <property type="match status" value="1"/>
</dbReference>
<name>YP148_YEAST</name>
<feature type="chain" id="PRO_0000257829" description="Uncharacterized protein YPR148C">
    <location>
        <begin position="1"/>
        <end position="435"/>
    </location>
</feature>
<feature type="region of interest" description="Disordered" evidence="1">
    <location>
        <begin position="174"/>
        <end position="210"/>
    </location>
</feature>
<feature type="region of interest" description="Disordered" evidence="1">
    <location>
        <begin position="290"/>
        <end position="372"/>
    </location>
</feature>
<feature type="compositionally biased region" description="Acidic residues" evidence="1">
    <location>
        <begin position="195"/>
        <end position="210"/>
    </location>
</feature>
<feature type="compositionally biased region" description="Basic and acidic residues" evidence="1">
    <location>
        <begin position="290"/>
        <end position="304"/>
    </location>
</feature>
<feature type="compositionally biased region" description="Polar residues" evidence="1">
    <location>
        <begin position="308"/>
        <end position="318"/>
    </location>
</feature>
<feature type="compositionally biased region" description="Basic and acidic residues" evidence="1">
    <location>
        <begin position="322"/>
        <end position="340"/>
    </location>
</feature>
<feature type="compositionally biased region" description="Basic and acidic residues" evidence="1">
    <location>
        <begin position="347"/>
        <end position="361"/>
    </location>
</feature>
<feature type="modified residue" description="Phosphoserine" evidence="3">
    <location>
        <position position="47"/>
    </location>
</feature>
<protein>
    <recommendedName>
        <fullName>Uncharacterized protein YPR148C</fullName>
    </recommendedName>
</protein>
<accession>Q06523</accession>
<accession>D6W4E5</accession>
<reference key="1">
    <citation type="journal article" date="1997" name="Nature">
        <title>The nucleotide sequence of Saccharomyces cerevisiae chromosome XVI.</title>
        <authorList>
            <person name="Bussey H."/>
            <person name="Storms R.K."/>
            <person name="Ahmed A."/>
            <person name="Albermann K."/>
            <person name="Allen E."/>
            <person name="Ansorge W."/>
            <person name="Araujo R."/>
            <person name="Aparicio A."/>
            <person name="Barrell B.G."/>
            <person name="Badcock K."/>
            <person name="Benes V."/>
            <person name="Botstein D."/>
            <person name="Bowman S."/>
            <person name="Brueckner M."/>
            <person name="Carpenter J."/>
            <person name="Cherry J.M."/>
            <person name="Chung E."/>
            <person name="Churcher C.M."/>
            <person name="Coster F."/>
            <person name="Davis K."/>
            <person name="Davis R.W."/>
            <person name="Dietrich F.S."/>
            <person name="Delius H."/>
            <person name="DiPaolo T."/>
            <person name="Dubois E."/>
            <person name="Duesterhoeft A."/>
            <person name="Duncan M."/>
            <person name="Floeth M."/>
            <person name="Fortin N."/>
            <person name="Friesen J.D."/>
            <person name="Fritz C."/>
            <person name="Goffeau A."/>
            <person name="Hall J."/>
            <person name="Hebling U."/>
            <person name="Heumann K."/>
            <person name="Hilbert H."/>
            <person name="Hillier L.W."/>
            <person name="Hunicke-Smith S."/>
            <person name="Hyman R.W."/>
            <person name="Johnston M."/>
            <person name="Kalman S."/>
            <person name="Kleine K."/>
            <person name="Komp C."/>
            <person name="Kurdi O."/>
            <person name="Lashkari D."/>
            <person name="Lew H."/>
            <person name="Lin A."/>
            <person name="Lin D."/>
            <person name="Louis E.J."/>
            <person name="Marathe R."/>
            <person name="Messenguy F."/>
            <person name="Mewes H.-W."/>
            <person name="Mirtipati S."/>
            <person name="Moestl D."/>
            <person name="Mueller-Auer S."/>
            <person name="Namath A."/>
            <person name="Nentwich U."/>
            <person name="Oefner P."/>
            <person name="Pearson D."/>
            <person name="Petel F.X."/>
            <person name="Pohl T.M."/>
            <person name="Purnelle B."/>
            <person name="Rajandream M.A."/>
            <person name="Rechmann S."/>
            <person name="Rieger M."/>
            <person name="Riles L."/>
            <person name="Roberts D."/>
            <person name="Schaefer M."/>
            <person name="Scharfe M."/>
            <person name="Scherens B."/>
            <person name="Schramm S."/>
            <person name="Schroeder M."/>
            <person name="Sdicu A.-M."/>
            <person name="Tettelin H."/>
            <person name="Urrestarazu L.A."/>
            <person name="Ushinsky S."/>
            <person name="Vierendeels F."/>
            <person name="Vissers S."/>
            <person name="Voss H."/>
            <person name="Walsh S.V."/>
            <person name="Wambutt R."/>
            <person name="Wang Y."/>
            <person name="Wedler E."/>
            <person name="Wedler H."/>
            <person name="Winnett E."/>
            <person name="Zhong W.-W."/>
            <person name="Zollner A."/>
            <person name="Vo D.H."/>
            <person name="Hani J."/>
        </authorList>
    </citation>
    <scope>NUCLEOTIDE SEQUENCE [LARGE SCALE GENOMIC DNA]</scope>
    <source>
        <strain>ATCC 204508 / S288c</strain>
    </source>
</reference>
<reference key="2">
    <citation type="journal article" date="2014" name="G3 (Bethesda)">
        <title>The reference genome sequence of Saccharomyces cerevisiae: Then and now.</title>
        <authorList>
            <person name="Engel S.R."/>
            <person name="Dietrich F.S."/>
            <person name="Fisk D.G."/>
            <person name="Binkley G."/>
            <person name="Balakrishnan R."/>
            <person name="Costanzo M.C."/>
            <person name="Dwight S.S."/>
            <person name="Hitz B.C."/>
            <person name="Karra K."/>
            <person name="Nash R.S."/>
            <person name="Weng S."/>
            <person name="Wong E.D."/>
            <person name="Lloyd P."/>
            <person name="Skrzypek M.S."/>
            <person name="Miyasato S.R."/>
            <person name="Simison M."/>
            <person name="Cherry J.M."/>
        </authorList>
    </citation>
    <scope>GENOME REANNOTATION</scope>
    <source>
        <strain>ATCC 204508 / S288c</strain>
    </source>
</reference>
<reference key="3">
    <citation type="journal article" date="2003" name="Nature">
        <title>Global analysis of protein localization in budding yeast.</title>
        <authorList>
            <person name="Huh W.-K."/>
            <person name="Falvo J.V."/>
            <person name="Gerke L.C."/>
            <person name="Carroll A.S."/>
            <person name="Howson R.W."/>
            <person name="Weissman J.S."/>
            <person name="O'Shea E.K."/>
        </authorList>
    </citation>
    <scope>SUBCELLULAR LOCATION [LARGE SCALE ANALYSIS]</scope>
</reference>
<reference key="4">
    <citation type="journal article" date="2008" name="Mol. Cell. Proteomics">
        <title>A multidimensional chromatography technology for in-depth phosphoproteome analysis.</title>
        <authorList>
            <person name="Albuquerque C.P."/>
            <person name="Smolka M.B."/>
            <person name="Payne S.H."/>
            <person name="Bafna V."/>
            <person name="Eng J."/>
            <person name="Zhou H."/>
        </authorList>
    </citation>
    <scope>PHOSPHORYLATION [LARGE SCALE ANALYSIS] AT SER-47</scope>
    <scope>IDENTIFICATION BY MASS SPECTROMETRY [LARGE SCALE ANALYSIS]</scope>
</reference>
<reference key="5">
    <citation type="journal article" date="2009" name="Science">
        <title>Global analysis of Cdk1 substrate phosphorylation sites provides insights into evolution.</title>
        <authorList>
            <person name="Holt L.J."/>
            <person name="Tuch B.B."/>
            <person name="Villen J."/>
            <person name="Johnson A.D."/>
            <person name="Gygi S.P."/>
            <person name="Morgan D.O."/>
        </authorList>
    </citation>
    <scope>IDENTIFICATION BY MASS SPECTROMETRY [LARGE SCALE ANALYSIS]</scope>
</reference>
<organism>
    <name type="scientific">Saccharomyces cerevisiae (strain ATCC 204508 / S288c)</name>
    <name type="common">Baker's yeast</name>
    <dbReference type="NCBI Taxonomy" id="559292"/>
    <lineage>
        <taxon>Eukaryota</taxon>
        <taxon>Fungi</taxon>
        <taxon>Dikarya</taxon>
        <taxon>Ascomycota</taxon>
        <taxon>Saccharomycotina</taxon>
        <taxon>Saccharomycetes</taxon>
        <taxon>Saccharomycetales</taxon>
        <taxon>Saccharomycetaceae</taxon>
        <taxon>Saccharomyces</taxon>
    </lineage>
</organism>
<proteinExistence type="evidence at protein level"/>
<gene>
    <name type="ordered locus">YPR148C</name>
</gene>
<sequence>MSGYFSGFSLNKITDSIATAAHKTQDTLNNALANANVNLNDPQTRLSIKSRTRFVQESLGTVSDISKLPPQYQFLEKKSDSLEKVCKRILLVSKTFEVEGYDYPPNLTESISDWWSLNKDGWFGSKKSESSTKKKGSNHDDAFLPRSFAQAISKAAVDCECEFQNLEHNEKAELKKKKESIKTAQTTEAQGADHNEEDEEDEEDEEDDEDLSNLIKVFDSWSTCYKNIDEGKAEMDSMMVKEFNKKLETLINQDFKKVHDLRKKVEESRLKFDTMRYEVKAKEAELEAKKAEATGEAHSKDVSAKDISANTTTSFDETPSTEDEKPKSEGAEEESKKEANEPTVDDVADRKEDLKSNKVNDEPPIEESEDNKLLEKLEDEFVSNTTAAVETMEEITDSSEILGLIKLFQNFQLVYFRQCVQEVEANLKVLNGLEI</sequence>
<evidence type="ECO:0000256" key="1">
    <source>
        <dbReference type="SAM" id="MobiDB-lite"/>
    </source>
</evidence>
<evidence type="ECO:0000269" key="2">
    <source>
    </source>
</evidence>
<evidence type="ECO:0007744" key="3">
    <source>
    </source>
</evidence>
<keyword id="KW-0963">Cytoplasm</keyword>
<keyword id="KW-0597">Phosphoprotein</keyword>
<keyword id="KW-1185">Reference proteome</keyword>
<comment type="subcellular location">
    <subcellularLocation>
        <location evidence="2">Cytoplasm</location>
    </subcellularLocation>
    <text>Cytoplasmic punctate structures.</text>
</comment>